<comment type="function">
    <text evidence="1">Transfers the 4'-phosphopantetheine moiety from coenzyme A to a Ser of mitochondrial acyl-carrier-protein.</text>
</comment>
<comment type="catalytic activity">
    <reaction>
        <text>apo-[ACP] + CoA = holo-[ACP] + adenosine 3',5'-bisphosphate + H(+)</text>
        <dbReference type="Rhea" id="RHEA:12068"/>
        <dbReference type="Rhea" id="RHEA-COMP:9685"/>
        <dbReference type="Rhea" id="RHEA-COMP:9690"/>
        <dbReference type="ChEBI" id="CHEBI:15378"/>
        <dbReference type="ChEBI" id="CHEBI:29999"/>
        <dbReference type="ChEBI" id="CHEBI:57287"/>
        <dbReference type="ChEBI" id="CHEBI:58343"/>
        <dbReference type="ChEBI" id="CHEBI:64479"/>
        <dbReference type="EC" id="2.7.8.7"/>
    </reaction>
</comment>
<comment type="subcellular location">
    <subcellularLocation>
        <location evidence="1">Mitochondrion</location>
    </subcellularLocation>
</comment>
<comment type="similarity">
    <text evidence="2">Belongs to the P-Pant transferase superfamily. AcpS family.</text>
</comment>
<protein>
    <recommendedName>
        <fullName>Mitochondrial holo-[acyl-carrier-protein] synthase</fullName>
        <shortName>Mitochondrial holo-ACP synthase</shortName>
        <ecNumber>2.7.8.7</ecNumber>
    </recommendedName>
    <alternativeName>
        <fullName>4'-phosphopantetheinyl transferase PPT2</fullName>
        <shortName>PPTase</shortName>
    </alternativeName>
</protein>
<organism>
    <name type="scientific">Candida glabrata (strain ATCC 2001 / BCRC 20586 / JCM 3761 / NBRC 0622 / NRRL Y-65 / CBS 138)</name>
    <name type="common">Yeast</name>
    <name type="synonym">Nakaseomyces glabratus</name>
    <dbReference type="NCBI Taxonomy" id="284593"/>
    <lineage>
        <taxon>Eukaryota</taxon>
        <taxon>Fungi</taxon>
        <taxon>Dikarya</taxon>
        <taxon>Ascomycota</taxon>
        <taxon>Saccharomycotina</taxon>
        <taxon>Saccharomycetes</taxon>
        <taxon>Saccharomycetales</taxon>
        <taxon>Saccharomycetaceae</taxon>
        <taxon>Nakaseomyces</taxon>
    </lineage>
</organism>
<feature type="chain" id="PRO_0000175744" description="Mitochondrial holo-[acyl-carrier-protein] synthase">
    <location>
        <begin position="1"/>
        <end position="152"/>
    </location>
</feature>
<keyword id="KW-0275">Fatty acid biosynthesis</keyword>
<keyword id="KW-0276">Fatty acid metabolism</keyword>
<keyword id="KW-0444">Lipid biosynthesis</keyword>
<keyword id="KW-0443">Lipid metabolism</keyword>
<keyword id="KW-0496">Mitochondrion</keyword>
<keyword id="KW-1185">Reference proteome</keyword>
<keyword id="KW-0808">Transferase</keyword>
<accession>Q6FJZ5</accession>
<dbReference type="EC" id="2.7.8.7"/>
<dbReference type="EMBL" id="CR380959">
    <property type="protein sequence ID" value="CAG62425.1"/>
    <property type="molecule type" value="Genomic_DNA"/>
</dbReference>
<dbReference type="RefSeq" id="XP_449449.1">
    <property type="nucleotide sequence ID" value="XM_449449.1"/>
</dbReference>
<dbReference type="SMR" id="Q6FJZ5"/>
<dbReference type="FunCoup" id="Q6FJZ5">
    <property type="interactions" value="40"/>
</dbReference>
<dbReference type="STRING" id="284593.Q6FJZ5"/>
<dbReference type="EnsemblFungi" id="CAGL0M02365g-T">
    <property type="protein sequence ID" value="CAGL0M02365g-T-p1"/>
    <property type="gene ID" value="CAGL0M02365g"/>
</dbReference>
<dbReference type="KEGG" id="cgr:2891457"/>
<dbReference type="CGD" id="CAL0136693">
    <property type="gene designation" value="CAGL0M02365g"/>
</dbReference>
<dbReference type="VEuPathDB" id="FungiDB:CAGL0M02365g"/>
<dbReference type="eggNOG" id="ENOG502S43T">
    <property type="taxonomic scope" value="Eukaryota"/>
</dbReference>
<dbReference type="HOGENOM" id="CLU_089696_4_1_1"/>
<dbReference type="InParanoid" id="Q6FJZ5"/>
<dbReference type="OMA" id="GVWATKE"/>
<dbReference type="Proteomes" id="UP000002428">
    <property type="component" value="Chromosome M"/>
</dbReference>
<dbReference type="GO" id="GO:0005739">
    <property type="term" value="C:mitochondrion"/>
    <property type="evidence" value="ECO:0007669"/>
    <property type="project" value="UniProtKB-SubCell"/>
</dbReference>
<dbReference type="GO" id="GO:0008897">
    <property type="term" value="F:holo-[acyl-carrier-protein] synthase activity"/>
    <property type="evidence" value="ECO:0007669"/>
    <property type="project" value="UniProtKB-EC"/>
</dbReference>
<dbReference type="GO" id="GO:0000287">
    <property type="term" value="F:magnesium ion binding"/>
    <property type="evidence" value="ECO:0007669"/>
    <property type="project" value="InterPro"/>
</dbReference>
<dbReference type="GO" id="GO:0006633">
    <property type="term" value="P:fatty acid biosynthetic process"/>
    <property type="evidence" value="ECO:0007669"/>
    <property type="project" value="UniProtKB-KW"/>
</dbReference>
<dbReference type="GO" id="GO:0031108">
    <property type="term" value="P:holo-[acyl-carrier-protein] biosynthetic process"/>
    <property type="evidence" value="ECO:0007669"/>
    <property type="project" value="EnsemblFungi"/>
</dbReference>
<dbReference type="Gene3D" id="3.90.470.20">
    <property type="entry name" value="4'-phosphopantetheinyl transferase domain"/>
    <property type="match status" value="1"/>
</dbReference>
<dbReference type="InterPro" id="IPR008278">
    <property type="entry name" value="4-PPantetheinyl_Trfase_dom"/>
</dbReference>
<dbReference type="InterPro" id="IPR037143">
    <property type="entry name" value="4-PPantetheinyl_Trfase_dom_sf"/>
</dbReference>
<dbReference type="InterPro" id="IPR016614">
    <property type="entry name" value="PPTase_2"/>
</dbReference>
<dbReference type="Pfam" id="PF01648">
    <property type="entry name" value="ACPS"/>
    <property type="match status" value="1"/>
</dbReference>
<dbReference type="PIRSF" id="PIRSF013370">
    <property type="entry name" value="ACPS_fun"/>
    <property type="match status" value="1"/>
</dbReference>
<dbReference type="SUPFAM" id="SSF56214">
    <property type="entry name" value="4'-phosphopantetheinyl transferase"/>
    <property type="match status" value="1"/>
</dbReference>
<reference key="1">
    <citation type="journal article" date="2004" name="Nature">
        <title>Genome evolution in yeasts.</title>
        <authorList>
            <person name="Dujon B."/>
            <person name="Sherman D."/>
            <person name="Fischer G."/>
            <person name="Durrens P."/>
            <person name="Casaregola S."/>
            <person name="Lafontaine I."/>
            <person name="de Montigny J."/>
            <person name="Marck C."/>
            <person name="Neuveglise C."/>
            <person name="Talla E."/>
            <person name="Goffard N."/>
            <person name="Frangeul L."/>
            <person name="Aigle M."/>
            <person name="Anthouard V."/>
            <person name="Babour A."/>
            <person name="Barbe V."/>
            <person name="Barnay S."/>
            <person name="Blanchin S."/>
            <person name="Beckerich J.-M."/>
            <person name="Beyne E."/>
            <person name="Bleykasten C."/>
            <person name="Boisrame A."/>
            <person name="Boyer J."/>
            <person name="Cattolico L."/>
            <person name="Confanioleri F."/>
            <person name="de Daruvar A."/>
            <person name="Despons L."/>
            <person name="Fabre E."/>
            <person name="Fairhead C."/>
            <person name="Ferry-Dumazet H."/>
            <person name="Groppi A."/>
            <person name="Hantraye F."/>
            <person name="Hennequin C."/>
            <person name="Jauniaux N."/>
            <person name="Joyet P."/>
            <person name="Kachouri R."/>
            <person name="Kerrest A."/>
            <person name="Koszul R."/>
            <person name="Lemaire M."/>
            <person name="Lesur I."/>
            <person name="Ma L."/>
            <person name="Muller H."/>
            <person name="Nicaud J.-M."/>
            <person name="Nikolski M."/>
            <person name="Oztas S."/>
            <person name="Ozier-Kalogeropoulos O."/>
            <person name="Pellenz S."/>
            <person name="Potier S."/>
            <person name="Richard G.-F."/>
            <person name="Straub M.-L."/>
            <person name="Suleau A."/>
            <person name="Swennen D."/>
            <person name="Tekaia F."/>
            <person name="Wesolowski-Louvel M."/>
            <person name="Westhof E."/>
            <person name="Wirth B."/>
            <person name="Zeniou-Meyer M."/>
            <person name="Zivanovic Y."/>
            <person name="Bolotin-Fukuhara M."/>
            <person name="Thierry A."/>
            <person name="Bouchier C."/>
            <person name="Caudron B."/>
            <person name="Scarpelli C."/>
            <person name="Gaillardin C."/>
            <person name="Weissenbach J."/>
            <person name="Wincker P."/>
            <person name="Souciet J.-L."/>
        </authorList>
    </citation>
    <scope>NUCLEOTIDE SEQUENCE [LARGE SCALE GENOMIC DNA]</scope>
    <source>
        <strain>ATCC 2001 / BCRC 20586 / JCM 3761 / NBRC 0622 / NRRL Y-65 / CBS 138</strain>
    </source>
</reference>
<evidence type="ECO:0000250" key="1"/>
<evidence type="ECO:0000305" key="2"/>
<proteinExistence type="inferred from homology"/>
<gene>
    <name type="primary">PPT2</name>
    <name type="ordered locus">CAGL0M02365g</name>
</gene>
<sequence>MSVLGVGCDVVHLPRMHRLLTKYDAGSRGFQRVVSKFMHPTERIALGVDGASLSAGQIRYIAGTWALKEAALKALHCAAPLHTVLPPAMFIYTKLLYRQRRSNGVPQLLLDNEALRLDQLQFLRQAKFLSTLSHDNEYLVAYTTLIDTKNLV</sequence>
<name>PPT2_CANGA</name>